<feature type="chain" id="PRO_0000219566" description="Gas vesicle ATPase GvpN">
    <location>
        <begin position="1"/>
        <end position="347"/>
    </location>
</feature>
<feature type="region of interest" description="Disordered" evidence="4">
    <location>
        <begin position="1"/>
        <end position="50"/>
    </location>
</feature>
<feature type="compositionally biased region" description="Basic and acidic residues" evidence="4">
    <location>
        <begin position="18"/>
        <end position="42"/>
    </location>
</feature>
<feature type="binding site" evidence="3">
    <location>
        <begin position="91"/>
        <end position="98"/>
    </location>
    <ligand>
        <name>ATP</name>
        <dbReference type="ChEBI" id="CHEBI:30616"/>
    </ligand>
</feature>
<protein>
    <recommendedName>
        <fullName evidence="1">Gas vesicle ATPase GvpN</fullName>
        <ecNumber evidence="1">3.6.4.-</ecNumber>
    </recommendedName>
    <alternativeName>
        <fullName>Gas vesicle protein N</fullName>
        <shortName>GvpN</shortName>
    </alternativeName>
</protein>
<proteinExistence type="evidence at transcript level"/>
<evidence type="ECO:0000250" key="1">
    <source>
        <dbReference type="UniProtKB" id="Q8YUT0"/>
    </source>
</evidence>
<evidence type="ECO:0000250" key="2">
    <source>
        <dbReference type="UniProtKB" id="Q9HI16"/>
    </source>
</evidence>
<evidence type="ECO:0000255" key="3"/>
<evidence type="ECO:0000256" key="4">
    <source>
        <dbReference type="SAM" id="MobiDB-lite"/>
    </source>
</evidence>
<evidence type="ECO:0000269" key="5">
    <source>
    </source>
</evidence>
<evidence type="ECO:0000269" key="6">
    <source>
    </source>
</evidence>
<evidence type="ECO:0000269" key="7">
    <source>
    </source>
</evidence>
<evidence type="ECO:0000303" key="8">
    <source>
    </source>
</evidence>
<evidence type="ECO:0000305" key="9"/>
<name>GVPN_HALMT</name>
<reference key="1">
    <citation type="journal article" date="1992" name="J. Mol. Biol.">
        <title>Three different but related gene clusters encoding gas vesicles in halophilic archaea.</title>
        <authorList>
            <person name="Englert C."/>
            <person name="Krueger K."/>
            <person name="Offner S."/>
            <person name="Pfeifer F."/>
        </authorList>
    </citation>
    <scope>NUCLEOTIDE SEQUENCE [GENOMIC DNA]</scope>
    <scope>GAS VESICLE GENE CLUSTER</scope>
    <source>
        <strain>ATCC 33500 / DSM 1411 / JCM 8866 / NBRC 14739 / NCIMB 2177 / R-4</strain>
    </source>
</reference>
<reference key="2">
    <citation type="journal article" date="2012" name="J. Bacteriol.">
        <title>Complete genome sequence of the metabolically versatile halophilic archaeon Haloferax mediterranei, a poly(3-hydroxybutyrate-co-3-hydroxyvalerate) producer.</title>
        <authorList>
            <person name="Han J."/>
            <person name="Zhang F."/>
            <person name="Hou J."/>
            <person name="Liu X."/>
            <person name="Li M."/>
            <person name="Liu H."/>
            <person name="Cai L."/>
            <person name="Zhang B."/>
            <person name="Chen Y."/>
            <person name="Zhou J."/>
            <person name="Hu S."/>
            <person name="Xiang H."/>
        </authorList>
    </citation>
    <scope>NUCLEOTIDE SEQUENCE [LARGE SCALE GENOMIC DNA]</scope>
    <source>
        <strain>ATCC 33500 / DSM 1411 / JCM 8866 / NBRC 14739 / NCIMB 2177 / R-4</strain>
    </source>
</reference>
<reference key="3">
    <citation type="journal article" date="1993" name="J. Biol. Chem.">
        <title>Analysis of gas vesicle gene expression in Haloferax mediterranei reveals that GvpA and GvpC are both gas vesicle structural proteins.</title>
        <authorList>
            <person name="Englert C."/>
            <person name="Pfeifer F."/>
        </authorList>
    </citation>
    <scope>INDUCTION</scope>
</reference>
<reference key="4">
    <citation type="journal article" date="1996" name="Microbiology">
        <title>Influence of salt on the transcription of the gas-vesicle genes of Haloferax mediterranei and identification of the endogenous transcriptional activator gene.</title>
        <authorList>
            <person name="Roeder R."/>
            <person name="Pfeifer F."/>
        </authorList>
    </citation>
    <scope>INDUCTION BY SALT</scope>
    <source>
        <strain>ATCC 33500 / DSM 1411 / JCM 8866 / NBRC 14739 / NCIMB 2177 / R-4</strain>
    </source>
</reference>
<dbReference type="EC" id="3.6.4.-" evidence="1"/>
<dbReference type="EMBL" id="X64701">
    <property type="protein sequence ID" value="CAA45943.1"/>
    <property type="molecule type" value="Genomic_DNA"/>
</dbReference>
<dbReference type="EMBL" id="CP001868">
    <property type="protein sequence ID" value="AFK19400.1"/>
    <property type="molecule type" value="Genomic_DNA"/>
</dbReference>
<dbReference type="PIR" id="S28114">
    <property type="entry name" value="S28114"/>
</dbReference>
<dbReference type="RefSeq" id="WP_004056708.1">
    <property type="nucleotide sequence ID" value="NC_017941.2"/>
</dbReference>
<dbReference type="SMR" id="Q02239"/>
<dbReference type="STRING" id="523841.HFX_1694"/>
<dbReference type="PaxDb" id="523841-HFX_1694"/>
<dbReference type="GeneID" id="40157049"/>
<dbReference type="KEGG" id="hme:HFX_1694"/>
<dbReference type="eggNOG" id="arCOG00441">
    <property type="taxonomic scope" value="Archaea"/>
</dbReference>
<dbReference type="HOGENOM" id="CLU_051123_0_0_2"/>
<dbReference type="OrthoDB" id="45425at2157"/>
<dbReference type="Proteomes" id="UP000006469">
    <property type="component" value="Chromosome"/>
</dbReference>
<dbReference type="GO" id="GO:0005737">
    <property type="term" value="C:cytoplasm"/>
    <property type="evidence" value="ECO:0007669"/>
    <property type="project" value="UniProtKB-SubCell"/>
</dbReference>
<dbReference type="GO" id="GO:0031411">
    <property type="term" value="C:gas vesicle"/>
    <property type="evidence" value="ECO:0007669"/>
    <property type="project" value="UniProtKB-SubCell"/>
</dbReference>
<dbReference type="GO" id="GO:0005524">
    <property type="term" value="F:ATP binding"/>
    <property type="evidence" value="ECO:0007669"/>
    <property type="project" value="UniProtKB-KW"/>
</dbReference>
<dbReference type="GO" id="GO:0016887">
    <property type="term" value="F:ATP hydrolysis activity"/>
    <property type="evidence" value="ECO:0007669"/>
    <property type="project" value="InterPro"/>
</dbReference>
<dbReference type="GO" id="GO:0031412">
    <property type="term" value="P:gas vesicle organization"/>
    <property type="evidence" value="ECO:0007669"/>
    <property type="project" value="InterPro"/>
</dbReference>
<dbReference type="CDD" id="cd00009">
    <property type="entry name" value="AAA"/>
    <property type="match status" value="1"/>
</dbReference>
<dbReference type="Gene3D" id="3.40.50.300">
    <property type="entry name" value="P-loop containing nucleotide triphosphate hydrolases"/>
    <property type="match status" value="1"/>
</dbReference>
<dbReference type="InterPro" id="IPR003593">
    <property type="entry name" value="AAA+_ATPase"/>
</dbReference>
<dbReference type="InterPro" id="IPR011704">
    <property type="entry name" value="ATPase_dyneun-rel_AAA"/>
</dbReference>
<dbReference type="InterPro" id="IPR050764">
    <property type="entry name" value="CbbQ/NirQ/NorQ/GpvN"/>
</dbReference>
<dbReference type="InterPro" id="IPR013462">
    <property type="entry name" value="Gas-vesicle_GvpN"/>
</dbReference>
<dbReference type="InterPro" id="IPR027417">
    <property type="entry name" value="P-loop_NTPase"/>
</dbReference>
<dbReference type="NCBIfam" id="TIGR02640">
    <property type="entry name" value="gas_vesic_GvpN"/>
    <property type="match status" value="1"/>
</dbReference>
<dbReference type="PANTHER" id="PTHR42759:SF1">
    <property type="entry name" value="MAGNESIUM-CHELATASE SUBUNIT CHLD"/>
    <property type="match status" value="1"/>
</dbReference>
<dbReference type="PANTHER" id="PTHR42759">
    <property type="entry name" value="MOXR FAMILY PROTEIN"/>
    <property type="match status" value="1"/>
</dbReference>
<dbReference type="Pfam" id="PF07728">
    <property type="entry name" value="AAA_5"/>
    <property type="match status" value="1"/>
</dbReference>
<dbReference type="SMART" id="SM00382">
    <property type="entry name" value="AAA"/>
    <property type="match status" value="1"/>
</dbReference>
<dbReference type="SUPFAM" id="SSF52540">
    <property type="entry name" value="P-loop containing nucleoside triphosphate hydrolases"/>
    <property type="match status" value="1"/>
</dbReference>
<sequence length="347" mass="39656">MTNSSRERKVRGSQIRTSRREKQDKNARNRTEKELTRLENHQTHRTKNGTSKLDERFIPEEQPFIETEAVTQVETRMRRWLDVGRPVHLIGPTGCGKTALAMHVARERDRPVVWINGDADLTTSDLVGEYAEKERISERDKYVHNVVKSKDIVRDRWVDNPLTLAVREGATLVYNEFSRTKPVANNVLLSVFEEGVLELPGQRGKSRYVDVHPDFRAILTSNSVEYAGVHEPQDALLDRLVGLYLDFYDRETEVEIVRAHVDDFDTEDTEQIVRLMRELRERLDVNVGTRAAIMAAEGLTTVDDLDRSILTDICVDVLASKVAQHSDVHELRDEVEATIKGMEGTLS</sequence>
<keyword id="KW-0067">ATP-binding</keyword>
<keyword id="KW-0963">Cytoplasm</keyword>
<keyword id="KW-0304">Gas vesicle</keyword>
<keyword id="KW-0378">Hydrolase</keyword>
<keyword id="KW-0547">Nucleotide-binding</keyword>
<gene>
    <name evidence="8" type="primary">gvpN</name>
    <name type="ordered locus">HFX_1694</name>
</gene>
<accession>Q02239</accession>
<accession>I3R590</accession>
<comment type="function">
    <text evidence="1 2">An ATPase that functions in gas vesicle formation (By similarity). A minor component of the gas vesicle, also found in soluble extracts (By similarity). Gas vesicles are hollow, gas filled proteinaceous nanostructures found in some microorganisms. They allow positioning of halobacteria at the optimal depth for growth in the poorly aerated, shallow brine pools of their habitat (By similarity).</text>
</comment>
<comment type="function">
    <text evidence="5 7">Expression of a 9.5 kb mc-vac DNA fragment containing 2 divergently transcribed regions (gvpD-gvpE-gvpF-gvpG-gvpH-gvpI-gvpJ-gvpK-gvpL-gvpM and gvpA-gvpC-gvpN-gvpO) allows H.volcanii to produce gas vesicles.</text>
</comment>
<comment type="catalytic activity">
    <reaction evidence="1">
        <text>ATP + H2O = ADP + phosphate + H(+)</text>
        <dbReference type="Rhea" id="RHEA:13065"/>
        <dbReference type="ChEBI" id="CHEBI:15377"/>
        <dbReference type="ChEBI" id="CHEBI:15378"/>
        <dbReference type="ChEBI" id="CHEBI:30616"/>
        <dbReference type="ChEBI" id="CHEBI:43474"/>
        <dbReference type="ChEBI" id="CHEBI:456216"/>
    </reaction>
</comment>
<comment type="subunit">
    <text evidence="2">Forms homodimers, a GvpN-GvpO heterodimer, interacts with GvpC and GvpL, might interact with GvpA.</text>
</comment>
<comment type="subcellular location">
    <subcellularLocation>
        <location evidence="2">Gas vesicle</location>
    </subcellularLocation>
    <subcellularLocation>
        <location evidence="2">Cytoplasm</location>
    </subcellularLocation>
</comment>
<comment type="induction">
    <text evidence="6 7">Expressed from a single promoter upstream of gvpA; most transcripts stop at the gvpA terminator, with low read-through into downstream gvpC-gvpN-gvpO. Expression starts in early stationary phase and is maximal in stationary phase (PubMed:7683649, PubMed:8757736). Highly expressed in 25% salt, poorly expressed in 15% salt, no gas vesicles are formed at 15% salt (PubMed:8757736).</text>
</comment>
<comment type="miscellaneous">
    <text evidence="5">Encoded in a 14-gene locus called mc-vac.</text>
</comment>
<comment type="similarity">
    <text evidence="9">Belongs to the CbbQ/NirQ/NorQ/GpvN family.</text>
</comment>
<organism>
    <name type="scientific">Haloferax mediterranei (strain ATCC 33500 / DSM 1411 / JCM 8866 / NBRC 14739 / NCIMB 2177 / R-4)</name>
    <name type="common">Halobacterium mediterranei</name>
    <dbReference type="NCBI Taxonomy" id="523841"/>
    <lineage>
        <taxon>Archaea</taxon>
        <taxon>Methanobacteriati</taxon>
        <taxon>Methanobacteriota</taxon>
        <taxon>Stenosarchaea group</taxon>
        <taxon>Halobacteria</taxon>
        <taxon>Halobacteriales</taxon>
        <taxon>Haloferacaceae</taxon>
        <taxon>Haloferax</taxon>
    </lineage>
</organism>